<proteinExistence type="evidence at protein level"/>
<protein>
    <recommendedName>
        <fullName evidence="4">All-trans-retinol dehydrogenase [NAD(+)] ADH7</fullName>
        <ecNumber evidence="2">1.1.1.105</ecNumber>
    </recommendedName>
    <alternativeName>
        <fullName>Alcohol dehydrogenase class 4 mu/sigma chain</fullName>
        <ecNumber evidence="2">1.1.1.1</ecNumber>
    </alternativeName>
    <alternativeName>
        <fullName>Alcohol dehydrogenase class IV mu/sigma chain</fullName>
    </alternativeName>
    <alternativeName>
        <fullName evidence="2">Omega-hydroxydecanoate dehydrogenase ADH7</fullName>
        <ecNumber evidence="2">1.1.1.66</ecNumber>
    </alternativeName>
</protein>
<dbReference type="EC" id="1.1.1.105" evidence="2"/>
<dbReference type="EC" id="1.1.1.1" evidence="2"/>
<dbReference type="EC" id="1.1.1.66" evidence="2"/>
<dbReference type="EMBL" id="X98746">
    <property type="protein sequence ID" value="CAA67297.1"/>
    <property type="molecule type" value="mRNA"/>
</dbReference>
<dbReference type="PIR" id="A53142">
    <property type="entry name" value="A53142"/>
</dbReference>
<dbReference type="RefSeq" id="NP_599156.1">
    <property type="nucleotide sequence ID" value="NM_134329.1"/>
</dbReference>
<dbReference type="SMR" id="P41682"/>
<dbReference type="FunCoup" id="P41682">
    <property type="interactions" value="132"/>
</dbReference>
<dbReference type="STRING" id="10116.ENSRNOP00000015870"/>
<dbReference type="iPTMnet" id="P41682"/>
<dbReference type="PhosphoSitePlus" id="P41682"/>
<dbReference type="PaxDb" id="10116-ENSRNOP00000015870"/>
<dbReference type="GeneID" id="171178"/>
<dbReference type="KEGG" id="rno:171178"/>
<dbReference type="AGR" id="RGD:621638"/>
<dbReference type="CTD" id="131"/>
<dbReference type="RGD" id="621638">
    <property type="gene designation" value="Adh7"/>
</dbReference>
<dbReference type="eggNOG" id="KOG0022">
    <property type="taxonomic scope" value="Eukaryota"/>
</dbReference>
<dbReference type="InParanoid" id="P41682"/>
<dbReference type="PhylomeDB" id="P41682"/>
<dbReference type="Reactome" id="R-RNO-71384">
    <property type="pathway name" value="Ethanol oxidation"/>
</dbReference>
<dbReference type="PRO" id="PR:P41682"/>
<dbReference type="Proteomes" id="UP000002494">
    <property type="component" value="Unplaced"/>
</dbReference>
<dbReference type="GO" id="GO:0005829">
    <property type="term" value="C:cytosol"/>
    <property type="evidence" value="ECO:0000318"/>
    <property type="project" value="GO_Central"/>
</dbReference>
<dbReference type="GO" id="GO:0004022">
    <property type="term" value="F:alcohol dehydrogenase (NAD+) activity"/>
    <property type="evidence" value="ECO:0000314"/>
    <property type="project" value="RGD"/>
</dbReference>
<dbReference type="GO" id="GO:0004031">
    <property type="term" value="F:aldehyde oxidase activity"/>
    <property type="evidence" value="ECO:0000266"/>
    <property type="project" value="RGD"/>
</dbReference>
<dbReference type="GO" id="GO:0004745">
    <property type="term" value="F:all-trans-retinol dehydrogenase (NAD+) activity"/>
    <property type="evidence" value="ECO:0000250"/>
    <property type="project" value="UniProtKB"/>
</dbReference>
<dbReference type="GO" id="GO:0035276">
    <property type="term" value="F:ethanol binding"/>
    <property type="evidence" value="ECO:0000314"/>
    <property type="project" value="RGD"/>
</dbReference>
<dbReference type="GO" id="GO:0042802">
    <property type="term" value="F:identical protein binding"/>
    <property type="evidence" value="ECO:0000353"/>
    <property type="project" value="RGD"/>
</dbReference>
<dbReference type="GO" id="GO:0051287">
    <property type="term" value="F:NAD binding"/>
    <property type="evidence" value="ECO:0000314"/>
    <property type="project" value="RGD"/>
</dbReference>
<dbReference type="GO" id="GO:0050153">
    <property type="term" value="F:omega-hydroxydecanoate dehydrogenase activity"/>
    <property type="evidence" value="ECO:0007669"/>
    <property type="project" value="UniProtKB-EC"/>
</dbReference>
<dbReference type="GO" id="GO:0048019">
    <property type="term" value="F:receptor antagonist activity"/>
    <property type="evidence" value="ECO:0000266"/>
    <property type="project" value="RGD"/>
</dbReference>
<dbReference type="GO" id="GO:0019841">
    <property type="term" value="F:retinol binding"/>
    <property type="evidence" value="ECO:0000314"/>
    <property type="project" value="RGD"/>
</dbReference>
<dbReference type="GO" id="GO:0008270">
    <property type="term" value="F:zinc ion binding"/>
    <property type="evidence" value="ECO:0000314"/>
    <property type="project" value="RGD"/>
</dbReference>
<dbReference type="GO" id="GO:0006068">
    <property type="term" value="P:ethanol catabolic process"/>
    <property type="evidence" value="ECO:0000266"/>
    <property type="project" value="RGD"/>
</dbReference>
<dbReference type="GO" id="GO:0006067">
    <property type="term" value="P:ethanol metabolic process"/>
    <property type="evidence" value="ECO:0000314"/>
    <property type="project" value="RGD"/>
</dbReference>
<dbReference type="GO" id="GO:0010430">
    <property type="term" value="P:fatty acid omega-oxidation"/>
    <property type="evidence" value="ECO:0000266"/>
    <property type="project" value="RGD"/>
</dbReference>
<dbReference type="GO" id="GO:0009617">
    <property type="term" value="P:response to bacterium"/>
    <property type="evidence" value="ECO:0000266"/>
    <property type="project" value="RGD"/>
</dbReference>
<dbReference type="GO" id="GO:0045471">
    <property type="term" value="P:response to ethanol"/>
    <property type="evidence" value="ECO:0000266"/>
    <property type="project" value="RGD"/>
</dbReference>
<dbReference type="GO" id="GO:0042573">
    <property type="term" value="P:retinoic acid metabolic process"/>
    <property type="evidence" value="ECO:0000266"/>
    <property type="project" value="RGD"/>
</dbReference>
<dbReference type="GO" id="GO:0001523">
    <property type="term" value="P:retinoid metabolic process"/>
    <property type="evidence" value="ECO:0000266"/>
    <property type="project" value="RGD"/>
</dbReference>
<dbReference type="GO" id="GO:0042572">
    <property type="term" value="P:retinol metabolic process"/>
    <property type="evidence" value="ECO:0000314"/>
    <property type="project" value="RGD"/>
</dbReference>
<dbReference type="CDD" id="cd08299">
    <property type="entry name" value="alcohol_DH_class_I_II_IV"/>
    <property type="match status" value="1"/>
</dbReference>
<dbReference type="FunFam" id="3.90.180.10:FF:000007">
    <property type="entry name" value="Alcohol dehydrogenase 6"/>
    <property type="match status" value="1"/>
</dbReference>
<dbReference type="FunFam" id="3.40.50.720:FF:001857">
    <property type="entry name" value="Alcohol dehydrogenase class 4 mu/sigma chain"/>
    <property type="match status" value="1"/>
</dbReference>
<dbReference type="Gene3D" id="3.90.180.10">
    <property type="entry name" value="Medium-chain alcohol dehydrogenases, catalytic domain"/>
    <property type="match status" value="1"/>
</dbReference>
<dbReference type="Gene3D" id="3.40.50.720">
    <property type="entry name" value="NAD(P)-binding Rossmann-like Domain"/>
    <property type="match status" value="1"/>
</dbReference>
<dbReference type="InterPro" id="IPR013149">
    <property type="entry name" value="ADH-like_C"/>
</dbReference>
<dbReference type="InterPro" id="IPR013154">
    <property type="entry name" value="ADH-like_N"/>
</dbReference>
<dbReference type="InterPro" id="IPR002328">
    <property type="entry name" value="ADH_Zn_CS"/>
</dbReference>
<dbReference type="InterPro" id="IPR011032">
    <property type="entry name" value="GroES-like_sf"/>
</dbReference>
<dbReference type="InterPro" id="IPR036291">
    <property type="entry name" value="NAD(P)-bd_dom_sf"/>
</dbReference>
<dbReference type="InterPro" id="IPR020843">
    <property type="entry name" value="PKS_ER"/>
</dbReference>
<dbReference type="PANTHER" id="PTHR43880">
    <property type="entry name" value="ALCOHOL DEHYDROGENASE"/>
    <property type="match status" value="1"/>
</dbReference>
<dbReference type="PANTHER" id="PTHR43880:SF2">
    <property type="entry name" value="ALL-TRANS-RETINOL DEHYDROGENASE [NAD(+)] ADH7"/>
    <property type="match status" value="1"/>
</dbReference>
<dbReference type="Pfam" id="PF08240">
    <property type="entry name" value="ADH_N"/>
    <property type="match status" value="1"/>
</dbReference>
<dbReference type="Pfam" id="PF00107">
    <property type="entry name" value="ADH_zinc_N"/>
    <property type="match status" value="1"/>
</dbReference>
<dbReference type="SMART" id="SM00829">
    <property type="entry name" value="PKS_ER"/>
    <property type="match status" value="1"/>
</dbReference>
<dbReference type="SUPFAM" id="SSF50129">
    <property type="entry name" value="GroES-like"/>
    <property type="match status" value="2"/>
</dbReference>
<dbReference type="SUPFAM" id="SSF51735">
    <property type="entry name" value="NAD(P)-binding Rossmann-fold domains"/>
    <property type="match status" value="1"/>
</dbReference>
<dbReference type="PROSITE" id="PS00059">
    <property type="entry name" value="ADH_ZINC"/>
    <property type="match status" value="1"/>
</dbReference>
<gene>
    <name type="primary">Adh7</name>
</gene>
<feature type="chain" id="PRO_0000160696" description="All-trans-retinol dehydrogenase [NAD(+)] ADH7">
    <location>
        <begin position="1"/>
        <end position="374"/>
    </location>
</feature>
<feature type="binding site" evidence="1">
    <location>
        <position position="47"/>
    </location>
    <ligand>
        <name>Zn(2+)</name>
        <dbReference type="ChEBI" id="CHEBI:29105"/>
        <label>1</label>
        <note>catalytic</note>
    </ligand>
</feature>
<feature type="binding site" evidence="1">
    <location>
        <position position="68"/>
    </location>
    <ligand>
        <name>Zn(2+)</name>
        <dbReference type="ChEBI" id="CHEBI:29105"/>
        <label>1</label>
        <note>catalytic</note>
    </ligand>
</feature>
<feature type="binding site" evidence="1">
    <location>
        <position position="98"/>
    </location>
    <ligand>
        <name>Zn(2+)</name>
        <dbReference type="ChEBI" id="CHEBI:29105"/>
        <label>2</label>
    </ligand>
</feature>
<feature type="binding site" evidence="1">
    <location>
        <position position="101"/>
    </location>
    <ligand>
        <name>Zn(2+)</name>
        <dbReference type="ChEBI" id="CHEBI:29105"/>
        <label>2</label>
    </ligand>
</feature>
<feature type="binding site" evidence="1">
    <location>
        <position position="104"/>
    </location>
    <ligand>
        <name>Zn(2+)</name>
        <dbReference type="ChEBI" id="CHEBI:29105"/>
        <label>2</label>
    </ligand>
</feature>
<feature type="binding site" evidence="1">
    <location>
        <position position="112"/>
    </location>
    <ligand>
        <name>Zn(2+)</name>
        <dbReference type="ChEBI" id="CHEBI:29105"/>
        <label>2</label>
    </ligand>
</feature>
<feature type="binding site" evidence="1">
    <location>
        <position position="174"/>
    </location>
    <ligand>
        <name>Zn(2+)</name>
        <dbReference type="ChEBI" id="CHEBI:29105"/>
        <label>1</label>
        <note>catalytic</note>
    </ligand>
</feature>
<feature type="binding site" evidence="1">
    <location>
        <begin position="199"/>
        <end position="204"/>
    </location>
    <ligand>
        <name>NAD(+)</name>
        <dbReference type="ChEBI" id="CHEBI:57540"/>
    </ligand>
</feature>
<feature type="binding site" evidence="1">
    <location>
        <position position="223"/>
    </location>
    <ligand>
        <name>NAD(+)</name>
        <dbReference type="ChEBI" id="CHEBI:57540"/>
    </ligand>
</feature>
<feature type="binding site" evidence="1">
    <location>
        <position position="228"/>
    </location>
    <ligand>
        <name>NAD(+)</name>
        <dbReference type="ChEBI" id="CHEBI:57540"/>
    </ligand>
</feature>
<feature type="binding site" evidence="1">
    <location>
        <begin position="292"/>
        <end position="294"/>
    </location>
    <ligand>
        <name>NAD(+)</name>
        <dbReference type="ChEBI" id="CHEBI:57540"/>
    </ligand>
</feature>
<feature type="binding site" evidence="1">
    <location>
        <position position="369"/>
    </location>
    <ligand>
        <name>NAD(+)</name>
        <dbReference type="ChEBI" id="CHEBI:57540"/>
    </ligand>
</feature>
<feature type="modified residue" description="N-acetylmethionine" evidence="5">
    <location>
        <position position="1"/>
    </location>
</feature>
<feature type="sequence conflict" description="In Ref. 1; AA sequence." evidence="4" ref="1">
    <original>MDTA</original>
    <variation>SNRV</variation>
    <location>
        <begin position="1"/>
        <end position="4"/>
    </location>
</feature>
<feature type="sequence conflict" description="In Ref. 2; CAA67297." evidence="4" ref="2">
    <original>G</original>
    <variation>E</variation>
    <location>
        <position position="109"/>
    </location>
</feature>
<feature type="sequence conflict" description="In Ref. 1; AA sequence." evidence="4" ref="1">
    <original>V</original>
    <variation>I</variation>
    <location>
        <position position="208"/>
    </location>
</feature>
<evidence type="ECO:0000250" key="1"/>
<evidence type="ECO:0000250" key="2">
    <source>
        <dbReference type="UniProtKB" id="P40394"/>
    </source>
</evidence>
<evidence type="ECO:0000269" key="3">
    <source>
    </source>
</evidence>
<evidence type="ECO:0000305" key="4"/>
<evidence type="ECO:0000305" key="5">
    <source>
    </source>
</evidence>
<reference key="1">
    <citation type="journal article" date="1994" name="Proc. Natl. Acad. Sci. U.S.A.">
        <title>Mammalian class IV alcohol dehydrogenase (stomach alcohol dehydrogenase): structure, origin, and correlation with enzymology.</title>
        <authorList>
            <person name="Pares X."/>
            <person name="Cederlund E."/>
            <person name="Moreno A."/>
            <person name="Hjelmqvist L."/>
            <person name="Farres J."/>
            <person name="Joernvall H."/>
        </authorList>
    </citation>
    <scope>PROTEIN SEQUENCE</scope>
    <scope>ACETYLATION AT MET-1</scope>
    <source>
        <strain>Sprague-Dawley</strain>
        <tissue>Stomach</tissue>
    </source>
</reference>
<reference key="2">
    <citation type="journal article" date="2000" name="J. Biol. Chem.">
        <title>Molecular basis for differential substrate specificity in class IV alcohol dehydrogenases: a conserved function in retinoid metabolism but not in ethanol oxidation.</title>
        <authorList>
            <person name="Crosas B."/>
            <person name="Allali-Hassani A."/>
            <person name="Martinez S.E."/>
            <person name="Martras S."/>
            <person name="Persson B."/>
            <person name="Jornvall H."/>
            <person name="Pares X."/>
            <person name="Farres J."/>
        </authorList>
    </citation>
    <scope>NUCLEOTIDE SEQUENCE [MRNA]</scope>
    <source>
        <strain>Sprague-Dawley</strain>
        <tissue>Lung</tissue>
    </source>
</reference>
<reference key="3">
    <citation type="journal article" date="1998" name="FEBS Lett.">
        <title>Retinoids, omega-hydroxyfatty acids and cytotoxic aldehydes as physiological substrates, and H2-receptor antagonists as pharmacological inhibitors, of human class IV alcohol dehydrogenase.</title>
        <authorList>
            <person name="Allali-Hassani A."/>
            <person name="Peralba J.M."/>
            <person name="Martras S."/>
            <person name="Farres J."/>
            <person name="Pares X."/>
        </authorList>
    </citation>
    <scope>ACTIVITY REGULATION</scope>
</reference>
<organism>
    <name type="scientific">Rattus norvegicus</name>
    <name type="common">Rat</name>
    <dbReference type="NCBI Taxonomy" id="10116"/>
    <lineage>
        <taxon>Eukaryota</taxon>
        <taxon>Metazoa</taxon>
        <taxon>Chordata</taxon>
        <taxon>Craniata</taxon>
        <taxon>Vertebrata</taxon>
        <taxon>Euteleostomi</taxon>
        <taxon>Mammalia</taxon>
        <taxon>Eutheria</taxon>
        <taxon>Euarchontoglires</taxon>
        <taxon>Glires</taxon>
        <taxon>Rodentia</taxon>
        <taxon>Myomorpha</taxon>
        <taxon>Muroidea</taxon>
        <taxon>Muridae</taxon>
        <taxon>Murinae</taxon>
        <taxon>Rattus</taxon>
    </lineage>
</organism>
<name>ADH7_RAT</name>
<sequence length="374" mass="40105">MDTAGKVIKCKAAVLWGTNQPFSIEDIEVAPPKAKEVRVKILATGICGTDDHVIKGTMVSKFPVIVGHEAVGIVESVGEEVTTVRPGDKVIPLFLPQCRECNPCRNPEGNLCIRSDLTGRGVLADGTTRFTCKGKPVQHFMNTSTFTEYTVLDESSVAKIDAEAPPEKACLIGCGFSTGYGAAVKTAKVSPGSTCAVFGLGGVGLSVVMGCKAAGASRIIGIDINKDKFQKALDVGATECINPRDFTKPISEVLSDMTGNTVQYTFEVIGRLETMVDALSSCHMNYGTSVVVGAPPSAKMLSYDPMLLFTGRTWKGCVFGGWKSRDDVPKLVTEFLEKKFDLGQLITHTLPFHNISEGFELLYSGQSIRTVLTF</sequence>
<accession>P41682</accession>
<accession>O55146</accession>
<comment type="function">
    <text evidence="2">Catalyzes the NAD-dependent oxidation of all-trans-retinol, alcohol, aldehyde and omega-hydroxy fatty acids and their derivatives. Oxidizes preferentially all trans-retinol, all-trans-4-hydroxyretinol, 9-cis-retinol, 2-hexenol, and long chain omega-hydroxy fatty acids such as juniperic acid. In vitro can also catalyze the NADH-dependent reduction of all-trans-retinal and aldehydes and their derivatives. Reduces preferentially all trans-retinal, all-trans-4-oxoretinal and hexanal. Catalyzes in the oxidative direction with higher efficiency. Therefore may participate in retinoid metabolism, fatty acid omega-oxidation, and elimination of cytotoxic aldehydes produced by lipid peroxidation.</text>
</comment>
<comment type="catalytic activity">
    <reaction evidence="2">
        <text>a primary alcohol + NAD(+) = an aldehyde + NADH + H(+)</text>
        <dbReference type="Rhea" id="RHEA:10736"/>
        <dbReference type="ChEBI" id="CHEBI:15378"/>
        <dbReference type="ChEBI" id="CHEBI:15734"/>
        <dbReference type="ChEBI" id="CHEBI:17478"/>
        <dbReference type="ChEBI" id="CHEBI:57540"/>
        <dbReference type="ChEBI" id="CHEBI:57945"/>
        <dbReference type="EC" id="1.1.1.1"/>
    </reaction>
    <physiologicalReaction direction="left-to-right" evidence="2">
        <dbReference type="Rhea" id="RHEA:10737"/>
    </physiologicalReaction>
    <physiologicalReaction direction="right-to-left" evidence="2">
        <dbReference type="Rhea" id="RHEA:10738"/>
    </physiologicalReaction>
</comment>
<comment type="catalytic activity">
    <reaction evidence="2">
        <text>10-hydroxydecanoate + NAD(+) = 10-oxodecanoate + NADH + H(+)</text>
        <dbReference type="Rhea" id="RHEA:20880"/>
        <dbReference type="ChEBI" id="CHEBI:11305"/>
        <dbReference type="ChEBI" id="CHEBI:15378"/>
        <dbReference type="ChEBI" id="CHEBI:57540"/>
        <dbReference type="ChEBI" id="CHEBI:57945"/>
        <dbReference type="ChEBI" id="CHEBI:58022"/>
        <dbReference type="EC" id="1.1.1.66"/>
    </reaction>
    <physiologicalReaction direction="left-to-right" evidence="2">
        <dbReference type="Rhea" id="RHEA:20881"/>
    </physiologicalReaction>
</comment>
<comment type="catalytic activity">
    <reaction evidence="2">
        <text>all-trans-retinol + NAD(+) = all-trans-retinal + NADH + H(+)</text>
        <dbReference type="Rhea" id="RHEA:21284"/>
        <dbReference type="ChEBI" id="CHEBI:15378"/>
        <dbReference type="ChEBI" id="CHEBI:17336"/>
        <dbReference type="ChEBI" id="CHEBI:17898"/>
        <dbReference type="ChEBI" id="CHEBI:57540"/>
        <dbReference type="ChEBI" id="CHEBI:57945"/>
        <dbReference type="EC" id="1.1.1.105"/>
    </reaction>
    <physiologicalReaction direction="left-to-right" evidence="2">
        <dbReference type="Rhea" id="RHEA:21285"/>
    </physiologicalReaction>
</comment>
<comment type="catalytic activity">
    <reaction evidence="2">
        <text>9-cis-retinol + NAD(+) = 9-cis-retinal + NADH + H(+)</text>
        <dbReference type="Rhea" id="RHEA:42052"/>
        <dbReference type="ChEBI" id="CHEBI:15378"/>
        <dbReference type="ChEBI" id="CHEBI:57540"/>
        <dbReference type="ChEBI" id="CHEBI:57945"/>
        <dbReference type="ChEBI" id="CHEBI:78272"/>
        <dbReference type="ChEBI" id="CHEBI:78273"/>
    </reaction>
    <physiologicalReaction direction="left-to-right" evidence="2">
        <dbReference type="Rhea" id="RHEA:42053"/>
    </physiologicalReaction>
</comment>
<comment type="catalytic activity">
    <reaction evidence="2">
        <text>all-trans-3,4-didehydroretinol + NAD(+) = all-trans-3,4-didehydroretinal + NADH + H(+)</text>
        <dbReference type="Rhea" id="RHEA:55940"/>
        <dbReference type="ChEBI" id="CHEBI:15378"/>
        <dbReference type="ChEBI" id="CHEBI:28537"/>
        <dbReference type="ChEBI" id="CHEBI:57540"/>
        <dbReference type="ChEBI" id="CHEBI:57945"/>
        <dbReference type="ChEBI" id="CHEBI:132246"/>
    </reaction>
    <physiologicalReaction direction="left-to-right" evidence="2">
        <dbReference type="Rhea" id="RHEA:55941"/>
    </physiologicalReaction>
</comment>
<comment type="catalytic activity">
    <reaction evidence="2">
        <text>all-trans-4-hydroxyretinol + NAD(+) = all-trans-4-hydroxyretinal + NADH + H(+)</text>
        <dbReference type="Rhea" id="RHEA:55936"/>
        <dbReference type="ChEBI" id="CHEBI:15378"/>
        <dbReference type="ChEBI" id="CHEBI:57540"/>
        <dbReference type="ChEBI" id="CHEBI:57945"/>
        <dbReference type="ChEBI" id="CHEBI:132259"/>
        <dbReference type="ChEBI" id="CHEBI:139346"/>
    </reaction>
    <physiologicalReaction direction="left-to-right" evidence="2">
        <dbReference type="Rhea" id="RHEA:55937"/>
    </physiologicalReaction>
</comment>
<comment type="catalytic activity">
    <reaction evidence="2">
        <text>all-trans-4-oxoretinol + NAD(+) = all-trans-4-oxoretinal + NADH + H(+)</text>
        <dbReference type="Rhea" id="RHEA:60632"/>
        <dbReference type="ChEBI" id="CHEBI:15378"/>
        <dbReference type="ChEBI" id="CHEBI:44597"/>
        <dbReference type="ChEBI" id="CHEBI:57540"/>
        <dbReference type="ChEBI" id="CHEBI:57945"/>
        <dbReference type="ChEBI" id="CHEBI:139347"/>
    </reaction>
    <physiologicalReaction direction="right-to-left" evidence="2">
        <dbReference type="Rhea" id="RHEA:60634"/>
    </physiologicalReaction>
</comment>
<comment type="catalytic activity">
    <reaction evidence="2">
        <text>12-hydroxydodecanoate + NAD(+) = 12-oxododecanoate + NADH + H(+)</text>
        <dbReference type="Rhea" id="RHEA:60980"/>
        <dbReference type="ChEBI" id="CHEBI:15378"/>
        <dbReference type="ChEBI" id="CHEBI:36204"/>
        <dbReference type="ChEBI" id="CHEBI:57540"/>
        <dbReference type="ChEBI" id="CHEBI:57945"/>
        <dbReference type="ChEBI" id="CHEBI:144067"/>
    </reaction>
    <physiologicalReaction direction="left-to-right" evidence="2">
        <dbReference type="Rhea" id="RHEA:60981"/>
    </physiologicalReaction>
</comment>
<comment type="catalytic activity">
    <reaction evidence="2">
        <text>16-hydroxyhexadecanoate + NAD(+) = 16-oxohexadecanoate + NADH + H(+)</text>
        <dbReference type="Rhea" id="RHEA:60984"/>
        <dbReference type="ChEBI" id="CHEBI:15378"/>
        <dbReference type="ChEBI" id="CHEBI:55329"/>
        <dbReference type="ChEBI" id="CHEBI:57540"/>
        <dbReference type="ChEBI" id="CHEBI:57945"/>
        <dbReference type="ChEBI" id="CHEBI:144068"/>
    </reaction>
    <physiologicalReaction direction="left-to-right" evidence="2">
        <dbReference type="Rhea" id="RHEA:60985"/>
    </physiologicalReaction>
</comment>
<comment type="catalytic activity">
    <reaction evidence="2">
        <text>hexan-1-ol + NAD(+) = hexanal + NADH + H(+)</text>
        <dbReference type="Rhea" id="RHEA:60972"/>
        <dbReference type="ChEBI" id="CHEBI:15378"/>
        <dbReference type="ChEBI" id="CHEBI:57540"/>
        <dbReference type="ChEBI" id="CHEBI:57945"/>
        <dbReference type="ChEBI" id="CHEBI:87393"/>
        <dbReference type="ChEBI" id="CHEBI:88528"/>
    </reaction>
    <physiologicalReaction direction="left-to-right" evidence="2">
        <dbReference type="Rhea" id="RHEA:60973"/>
    </physiologicalReaction>
    <physiologicalReaction direction="right-to-left" evidence="2">
        <dbReference type="Rhea" id="RHEA:60974"/>
    </physiologicalReaction>
</comment>
<comment type="catalytic activity">
    <reaction evidence="2">
        <text>(E)-hex-2-en-1-ol + NAD(+) = (E)-hex-2-enal + NADH + H(+)</text>
        <dbReference type="Rhea" id="RHEA:60988"/>
        <dbReference type="ChEBI" id="CHEBI:15378"/>
        <dbReference type="ChEBI" id="CHEBI:28913"/>
        <dbReference type="ChEBI" id="CHEBI:57540"/>
        <dbReference type="ChEBI" id="CHEBI:57945"/>
        <dbReference type="ChEBI" id="CHEBI:141205"/>
    </reaction>
    <physiologicalReaction direction="left-to-right" evidence="2">
        <dbReference type="Rhea" id="RHEA:60989"/>
    </physiologicalReaction>
    <physiologicalReaction direction="right-to-left" evidence="2">
        <dbReference type="Rhea" id="RHEA:60990"/>
    </physiologicalReaction>
</comment>
<comment type="catalytic activity">
    <reaction evidence="2">
        <text>(E)-4-hydroxynon-2-en-1-ol + NAD(+) = (E)-4-hydroxynon-2-enal + NADH + H(+)</text>
        <dbReference type="Rhea" id="RHEA:60976"/>
        <dbReference type="ChEBI" id="CHEBI:15378"/>
        <dbReference type="ChEBI" id="CHEBI:57540"/>
        <dbReference type="ChEBI" id="CHEBI:57945"/>
        <dbReference type="ChEBI" id="CHEBI:58968"/>
        <dbReference type="ChEBI" id="CHEBI:142617"/>
    </reaction>
    <physiologicalReaction direction="right-to-left" evidence="2">
        <dbReference type="Rhea" id="RHEA:60978"/>
    </physiologicalReaction>
</comment>
<comment type="cofactor">
    <cofactor evidence="1">
        <name>Zn(2+)</name>
        <dbReference type="ChEBI" id="CHEBI:29105"/>
    </cofactor>
    <text evidence="1">Binds 2 Zn(2+) ions per subunit.</text>
</comment>
<comment type="activity regulation">
    <text evidence="2 3">Retinol oxidation is inhibited by the detergent Tween 80. Ethanol inhibits both all-trans-retinol and 9-cis-retinol oxidation. 13-cis-retinol is an effective competitive inhibitor of the 9-cis-retinol oxidation. All-trans-retinoic acid is a powerful inhibitor of all-trans-retinol oxidation. 13-cis-retinoic acid is a powerful inhibitor of all-trans-retinol oxidation (By similarity). Cimetidine and ranitidine inhibited ethanol oxidation (PubMed:9600267).</text>
</comment>
<comment type="subunit">
    <text>Homodimer.</text>
</comment>
<comment type="subcellular location">
    <subcellularLocation>
        <location>Cytoplasm</location>
    </subcellularLocation>
</comment>
<comment type="tissue specificity">
    <text>Preferentially expressed in stomach.</text>
</comment>
<comment type="similarity">
    <text evidence="4">Belongs to the zinc-containing alcohol dehydrogenase family. Class-IV subfamily.</text>
</comment>
<keyword id="KW-0007">Acetylation</keyword>
<keyword id="KW-0963">Cytoplasm</keyword>
<keyword id="KW-0903">Direct protein sequencing</keyword>
<keyword id="KW-0443">Lipid metabolism</keyword>
<keyword id="KW-0479">Metal-binding</keyword>
<keyword id="KW-0520">NAD</keyword>
<keyword id="KW-0560">Oxidoreductase</keyword>
<keyword id="KW-1185">Reference proteome</keyword>
<keyword id="KW-0862">Zinc</keyword>